<feature type="chain" id="PRO_0000136730" description="Tryptophan--tRNA ligase">
    <location>
        <begin position="1"/>
        <end position="386"/>
    </location>
</feature>
<feature type="short sequence motif" description="'HIGH' region">
    <location>
        <begin position="82"/>
        <end position="90"/>
    </location>
</feature>
<feature type="short sequence motif" description="'KMSKS' region">
    <location>
        <begin position="253"/>
        <end position="257"/>
    </location>
</feature>
<feature type="strand" evidence="3">
    <location>
        <begin position="12"/>
        <end position="14"/>
    </location>
</feature>
<feature type="helix" evidence="3">
    <location>
        <begin position="18"/>
        <end position="24"/>
    </location>
</feature>
<feature type="helix" evidence="3">
    <location>
        <begin position="32"/>
        <end position="41"/>
    </location>
</feature>
<feature type="helix" evidence="3">
    <location>
        <begin position="48"/>
        <end position="51"/>
    </location>
</feature>
<feature type="strand" evidence="3">
    <location>
        <begin position="54"/>
        <end position="60"/>
    </location>
</feature>
<feature type="helix" evidence="3">
    <location>
        <begin position="61"/>
        <end position="69"/>
    </location>
</feature>
<feature type="strand" evidence="3">
    <location>
        <begin position="75"/>
        <end position="80"/>
    </location>
</feature>
<feature type="helix" evidence="3">
    <location>
        <begin position="88"/>
        <end position="104"/>
    </location>
</feature>
<feature type="strand" evidence="3">
    <location>
        <begin position="107"/>
        <end position="112"/>
    </location>
</feature>
<feature type="helix" evidence="3">
    <location>
        <begin position="114"/>
        <end position="120"/>
    </location>
</feature>
<feature type="helix" evidence="3">
    <location>
        <begin position="126"/>
        <end position="141"/>
    </location>
</feature>
<feature type="strand" evidence="3">
    <location>
        <begin position="149"/>
        <end position="154"/>
    </location>
</feature>
<feature type="turn" evidence="3">
    <location>
        <begin position="155"/>
        <end position="157"/>
    </location>
</feature>
<feature type="helix" evidence="3">
    <location>
        <begin position="160"/>
        <end position="171"/>
    </location>
</feature>
<feature type="helix" evidence="3">
    <location>
        <begin position="174"/>
        <end position="181"/>
    </location>
</feature>
<feature type="helix" evidence="3">
    <location>
        <begin position="189"/>
        <end position="199"/>
    </location>
</feature>
<feature type="helix" evidence="3">
    <location>
        <begin position="200"/>
        <end position="203"/>
    </location>
</feature>
<feature type="strand" evidence="3">
    <location>
        <begin position="204"/>
        <end position="207"/>
    </location>
</feature>
<feature type="strand" evidence="3">
    <location>
        <begin position="209"/>
        <end position="214"/>
    </location>
</feature>
<feature type="helix" evidence="3">
    <location>
        <begin position="215"/>
        <end position="217"/>
    </location>
</feature>
<feature type="helix" evidence="3">
    <location>
        <begin position="218"/>
        <end position="227"/>
    </location>
</feature>
<feature type="helix" evidence="3">
    <location>
        <begin position="229"/>
        <end position="231"/>
    </location>
</feature>
<feature type="strand" evidence="3">
    <location>
        <begin position="237"/>
        <end position="241"/>
    </location>
</feature>
<feature type="strand" evidence="3">
    <location>
        <begin position="250"/>
        <end position="252"/>
    </location>
</feature>
<feature type="helix" evidence="3">
    <location>
        <begin position="259"/>
        <end position="261"/>
    </location>
</feature>
<feature type="helix" evidence="3">
    <location>
        <begin position="269"/>
        <end position="277"/>
    </location>
</feature>
<feature type="helix" evidence="3">
    <location>
        <begin position="302"/>
        <end position="309"/>
    </location>
</feature>
<feature type="helix" evidence="3">
    <location>
        <begin position="315"/>
        <end position="326"/>
    </location>
</feature>
<feature type="helix" evidence="3">
    <location>
        <begin position="332"/>
        <end position="357"/>
    </location>
</feature>
<feature type="helix" evidence="3">
    <location>
        <begin position="361"/>
        <end position="365"/>
    </location>
</feature>
<feature type="helix" evidence="3">
    <location>
        <begin position="369"/>
        <end position="375"/>
    </location>
</feature>
<comment type="catalytic activity">
    <reaction evidence="1">
        <text>tRNA(Trp) + L-tryptophan + ATP = L-tryptophyl-tRNA(Trp) + AMP + diphosphate + H(+)</text>
        <dbReference type="Rhea" id="RHEA:24080"/>
        <dbReference type="Rhea" id="RHEA-COMP:9671"/>
        <dbReference type="Rhea" id="RHEA-COMP:9705"/>
        <dbReference type="ChEBI" id="CHEBI:15378"/>
        <dbReference type="ChEBI" id="CHEBI:30616"/>
        <dbReference type="ChEBI" id="CHEBI:33019"/>
        <dbReference type="ChEBI" id="CHEBI:57912"/>
        <dbReference type="ChEBI" id="CHEBI:78442"/>
        <dbReference type="ChEBI" id="CHEBI:78535"/>
        <dbReference type="ChEBI" id="CHEBI:456215"/>
        <dbReference type="EC" id="6.1.1.2"/>
    </reaction>
</comment>
<comment type="subcellular location">
    <subcellularLocation>
        <location evidence="1">Cytoplasm</location>
    </subcellularLocation>
</comment>
<comment type="similarity">
    <text evidence="1">Belongs to the class-I aminoacyl-tRNA synthetase family.</text>
</comment>
<comment type="sequence caution" evidence="2">
    <conflict type="erroneous initiation">
        <sequence resource="EMBL-CDS" id="BAA31046"/>
    </conflict>
</comment>
<organism>
    <name type="scientific">Pyrococcus horikoshii (strain ATCC 700860 / DSM 12428 / JCM 9974 / NBRC 100139 / OT-3)</name>
    <dbReference type="NCBI Taxonomy" id="70601"/>
    <lineage>
        <taxon>Archaea</taxon>
        <taxon>Methanobacteriati</taxon>
        <taxon>Methanobacteriota</taxon>
        <taxon>Thermococci</taxon>
        <taxon>Thermococcales</taxon>
        <taxon>Thermococcaceae</taxon>
        <taxon>Pyrococcus</taxon>
    </lineage>
</organism>
<name>SYW_PYRHO</name>
<reference key="1">
    <citation type="journal article" date="1998" name="DNA Res.">
        <title>Complete sequence and gene organization of the genome of a hyper-thermophilic archaebacterium, Pyrococcus horikoshii OT3.</title>
        <authorList>
            <person name="Kawarabayasi Y."/>
            <person name="Sawada M."/>
            <person name="Horikawa H."/>
            <person name="Haikawa Y."/>
            <person name="Hino Y."/>
            <person name="Yamamoto S."/>
            <person name="Sekine M."/>
            <person name="Baba S."/>
            <person name="Kosugi H."/>
            <person name="Hosoyama A."/>
            <person name="Nagai Y."/>
            <person name="Sakai M."/>
            <person name="Ogura K."/>
            <person name="Otsuka R."/>
            <person name="Nakazawa H."/>
            <person name="Takamiya M."/>
            <person name="Ohfuku Y."/>
            <person name="Funahashi T."/>
            <person name="Tanaka T."/>
            <person name="Kudoh Y."/>
            <person name="Yamazaki J."/>
            <person name="Kushida N."/>
            <person name="Oguchi A."/>
            <person name="Aoki K."/>
            <person name="Yoshizawa T."/>
            <person name="Nakamura Y."/>
            <person name="Robb F.T."/>
            <person name="Horikoshi K."/>
            <person name="Masuchi Y."/>
            <person name="Shizuya H."/>
            <person name="Kikuchi H."/>
        </authorList>
    </citation>
    <scope>NUCLEOTIDE SEQUENCE [LARGE SCALE GENOMIC DNA]</scope>
    <source>
        <strain>ATCC 700860 / DSM 12428 / JCM 9974 / NBRC 100139 / OT-3</strain>
    </source>
</reference>
<accession>O59584</accession>
<gene>
    <name evidence="1" type="primary">trpS</name>
    <name type="ordered locus">PH1921</name>
</gene>
<keyword id="KW-0002">3D-structure</keyword>
<keyword id="KW-0030">Aminoacyl-tRNA synthetase</keyword>
<keyword id="KW-0067">ATP-binding</keyword>
<keyword id="KW-0963">Cytoplasm</keyword>
<keyword id="KW-0436">Ligase</keyword>
<keyword id="KW-0547">Nucleotide-binding</keyword>
<keyword id="KW-0648">Protein biosynthesis</keyword>
<evidence type="ECO:0000255" key="1">
    <source>
        <dbReference type="HAMAP-Rule" id="MF_00140"/>
    </source>
</evidence>
<evidence type="ECO:0000305" key="2"/>
<evidence type="ECO:0007829" key="3">
    <source>
        <dbReference type="PDB" id="3JXE"/>
    </source>
</evidence>
<dbReference type="EC" id="6.1.1.2" evidence="1"/>
<dbReference type="EMBL" id="BA000001">
    <property type="protein sequence ID" value="BAA31046.1"/>
    <property type="status" value="ALT_INIT"/>
    <property type="molecule type" value="Genomic_DNA"/>
</dbReference>
<dbReference type="PIR" id="G71206">
    <property type="entry name" value="G71206"/>
</dbReference>
<dbReference type="RefSeq" id="WP_010885986.1">
    <property type="nucleotide sequence ID" value="NC_000961.1"/>
</dbReference>
<dbReference type="PDB" id="3JXE">
    <property type="method" value="X-ray"/>
    <property type="resolution" value="3.00 A"/>
    <property type="chains" value="A/B=1-386"/>
</dbReference>
<dbReference type="PDBsum" id="3JXE"/>
<dbReference type="SMR" id="O59584"/>
<dbReference type="STRING" id="70601.gene:9378931"/>
<dbReference type="EnsemblBacteria" id="BAA31046">
    <property type="protein sequence ID" value="BAA31046"/>
    <property type="gene ID" value="BAA31046"/>
</dbReference>
<dbReference type="GeneID" id="1442768"/>
<dbReference type="KEGG" id="pho:PH1921"/>
<dbReference type="eggNOG" id="arCOG01887">
    <property type="taxonomic scope" value="Archaea"/>
</dbReference>
<dbReference type="OrthoDB" id="371821at2157"/>
<dbReference type="BRENDA" id="6.1.1.2">
    <property type="organism ID" value="5244"/>
</dbReference>
<dbReference type="EvolutionaryTrace" id="O59584"/>
<dbReference type="Proteomes" id="UP000000752">
    <property type="component" value="Chromosome"/>
</dbReference>
<dbReference type="GO" id="GO:0005737">
    <property type="term" value="C:cytoplasm"/>
    <property type="evidence" value="ECO:0007669"/>
    <property type="project" value="UniProtKB-SubCell"/>
</dbReference>
<dbReference type="GO" id="GO:0005524">
    <property type="term" value="F:ATP binding"/>
    <property type="evidence" value="ECO:0007669"/>
    <property type="project" value="UniProtKB-UniRule"/>
</dbReference>
<dbReference type="GO" id="GO:0004830">
    <property type="term" value="F:tryptophan-tRNA ligase activity"/>
    <property type="evidence" value="ECO:0007669"/>
    <property type="project" value="UniProtKB-UniRule"/>
</dbReference>
<dbReference type="GO" id="GO:0006436">
    <property type="term" value="P:tryptophanyl-tRNA aminoacylation"/>
    <property type="evidence" value="ECO:0007669"/>
    <property type="project" value="UniProtKB-UniRule"/>
</dbReference>
<dbReference type="CDD" id="cd00806">
    <property type="entry name" value="TrpRS_core"/>
    <property type="match status" value="1"/>
</dbReference>
<dbReference type="FunFam" id="1.10.240.10:FF:000007">
    <property type="entry name" value="Tryptophan--tRNA ligase"/>
    <property type="match status" value="1"/>
</dbReference>
<dbReference type="FunFam" id="3.40.50.620:FF:000138">
    <property type="entry name" value="Tryptophan--tRNA ligase"/>
    <property type="match status" value="1"/>
</dbReference>
<dbReference type="Gene3D" id="3.40.50.620">
    <property type="entry name" value="HUPs"/>
    <property type="match status" value="1"/>
</dbReference>
<dbReference type="Gene3D" id="1.10.240.10">
    <property type="entry name" value="Tyrosyl-Transfer RNA Synthetase"/>
    <property type="match status" value="1"/>
</dbReference>
<dbReference type="HAMAP" id="MF_00140_A">
    <property type="entry name" value="Trp_tRNA_synth_A"/>
    <property type="match status" value="1"/>
</dbReference>
<dbReference type="InterPro" id="IPR001412">
    <property type="entry name" value="aa-tRNA-synth_I_CS"/>
</dbReference>
<dbReference type="InterPro" id="IPR002305">
    <property type="entry name" value="aa-tRNA-synth_Ic"/>
</dbReference>
<dbReference type="InterPro" id="IPR014729">
    <property type="entry name" value="Rossmann-like_a/b/a_fold"/>
</dbReference>
<dbReference type="InterPro" id="IPR002306">
    <property type="entry name" value="Trp-tRNA-ligase"/>
</dbReference>
<dbReference type="InterPro" id="IPR020653">
    <property type="entry name" value="Tryptophan-tRNA-ligase_arc"/>
</dbReference>
<dbReference type="NCBIfam" id="NF008924">
    <property type="entry name" value="PRK12285.1-1"/>
    <property type="match status" value="1"/>
</dbReference>
<dbReference type="NCBIfam" id="NF008927">
    <property type="entry name" value="PRK12285.1-4"/>
    <property type="match status" value="1"/>
</dbReference>
<dbReference type="NCBIfam" id="TIGR00233">
    <property type="entry name" value="trpS"/>
    <property type="match status" value="1"/>
</dbReference>
<dbReference type="PANTHER" id="PTHR10055:SF1">
    <property type="entry name" value="TRYPTOPHAN--TRNA LIGASE, CYTOPLASMIC"/>
    <property type="match status" value="1"/>
</dbReference>
<dbReference type="PANTHER" id="PTHR10055">
    <property type="entry name" value="TRYPTOPHANYL-TRNA SYNTHETASE"/>
    <property type="match status" value="1"/>
</dbReference>
<dbReference type="Pfam" id="PF00579">
    <property type="entry name" value="tRNA-synt_1b"/>
    <property type="match status" value="1"/>
</dbReference>
<dbReference type="PRINTS" id="PR01039">
    <property type="entry name" value="TRNASYNTHTRP"/>
</dbReference>
<dbReference type="SUPFAM" id="SSF52374">
    <property type="entry name" value="Nucleotidylyl transferase"/>
    <property type="match status" value="1"/>
</dbReference>
<dbReference type="PROSITE" id="PS00178">
    <property type="entry name" value="AA_TRNA_LIGASE_I"/>
    <property type="match status" value="1"/>
</dbReference>
<proteinExistence type="evidence at protein level"/>
<protein>
    <recommendedName>
        <fullName evidence="1">Tryptophan--tRNA ligase</fullName>
        <ecNumber evidence="1">6.1.1.2</ecNumber>
    </recommendedName>
    <alternativeName>
        <fullName evidence="1">Tryptophanyl-tRNA synthetase</fullName>
        <shortName evidence="1">TrpRS</shortName>
    </alternativeName>
</protein>
<sequence length="386" mass="45305">MVEEFKVTPWEVEGVVDYDKLIKHFGTSPLTEDLLEKTAELTKSELPIFFRRKFFFSHRDYDLILKDYEEGRGFFLYTGRGPSGPMHIGHIIPFFATKWLQEKFGVNLYIQITDDEKFLFKENLTFDDTKRWAYDNILDIIAVGFDPDKTFIFQNSEFTKIYEMAIPIAKKINFSMAKAVFGFTEQSKIGMIFFPAIQIAPTFFERKRCLIPAAIDQDPYWRLQRDFAESLGYYKTAALHSKFVPSLTSLSGKMSASKPETAIYLTDSPEDVEKKVWKFTLTGGRPTLKEQREKGGEPEKCVVFKWLEIFFEEDDKKLKERYYACKNGELTCGECKRYLISKIQEFLKEHQRRRKKAEKLVEKFKYTGKLAQEMWNEAIPEPLKRS</sequence>